<organism>
    <name type="scientific">Edwardsiella tarda</name>
    <dbReference type="NCBI Taxonomy" id="636"/>
    <lineage>
        <taxon>Bacteria</taxon>
        <taxon>Pseudomonadati</taxon>
        <taxon>Pseudomonadota</taxon>
        <taxon>Gammaproteobacteria</taxon>
        <taxon>Enterobacterales</taxon>
        <taxon>Hafniaceae</taxon>
        <taxon>Edwardsiella</taxon>
    </lineage>
</organism>
<reference key="1">
    <citation type="journal article" date="1996" name="Arch. Microbiol.">
        <title>Molecular cloning, characterization, and sequencing of the hemolysin gene from Edwardsiella tarda.</title>
        <authorList>
            <person name="Chen J.D."/>
            <person name="Lai S.Y."/>
            <person name="Huang S.L."/>
        </authorList>
    </citation>
    <scope>NUCLEOTIDE SEQUENCE [GENOMIC DNA]</scope>
    <source>
        <strain>ET-16</strain>
    </source>
</reference>
<proteinExistence type="predicted"/>
<feature type="chain" id="PRO_0000066253" description="Uncharacterized 34.8 kDa protein in hlyA 3'region">
    <location>
        <begin position="1"/>
        <end position="311"/>
    </location>
</feature>
<feature type="transmembrane region" description="Helical" evidence="1">
    <location>
        <begin position="168"/>
        <end position="188"/>
    </location>
</feature>
<evidence type="ECO:0000255" key="1"/>
<evidence type="ECO:0000305" key="2"/>
<comment type="subcellular location">
    <subcellularLocation>
        <location evidence="2">Cell membrane</location>
        <topology evidence="2">Single-pass membrane protein</topology>
    </subcellularLocation>
</comment>
<dbReference type="EMBL" id="L43071">
    <property type="protein sequence ID" value="AAB05200.1"/>
    <property type="molecule type" value="Genomic_DNA"/>
</dbReference>
<dbReference type="SMR" id="Q47877"/>
<dbReference type="TCDB" id="1.C.41.1.2">
    <property type="family name" value="the tripartite haemolysin bl (hbl) family"/>
</dbReference>
<dbReference type="GO" id="GO:0005886">
    <property type="term" value="C:plasma membrane"/>
    <property type="evidence" value="ECO:0007669"/>
    <property type="project" value="UniProtKB-SubCell"/>
</dbReference>
<dbReference type="CDD" id="cd22653">
    <property type="entry name" value="ClyA_HblB-like"/>
    <property type="match status" value="1"/>
</dbReference>
<dbReference type="Gene3D" id="1.20.1170.10">
    <property type="match status" value="1"/>
</dbReference>
<dbReference type="InterPro" id="IPR052785">
    <property type="entry name" value="Enterotoxin_cmpnt"/>
</dbReference>
<dbReference type="InterPro" id="IPR008414">
    <property type="entry name" value="HBL"/>
</dbReference>
<dbReference type="PANTHER" id="PTHR38443">
    <property type="match status" value="1"/>
</dbReference>
<dbReference type="PANTHER" id="PTHR38443:SF2">
    <property type="entry name" value="NON-HEMOLYTIC ENTEROTOXIN LYTIC COMPONENT L1"/>
    <property type="match status" value="1"/>
</dbReference>
<dbReference type="Pfam" id="PF05791">
    <property type="entry name" value="Bacillus_HBL"/>
    <property type="match status" value="1"/>
</dbReference>
<dbReference type="SUPFAM" id="SSF58100">
    <property type="entry name" value="Bacterial hemolysins"/>
    <property type="match status" value="1"/>
</dbReference>
<accession>Q47877</accession>
<protein>
    <recommendedName>
        <fullName>Uncharacterized 34.8 kDa protein in hlyA 3'region</fullName>
    </recommendedName>
</protein>
<keyword id="KW-1003">Cell membrane</keyword>
<keyword id="KW-0472">Membrane</keyword>
<keyword id="KW-0812">Transmembrane</keyword>
<keyword id="KW-1133">Transmembrane helix</keyword>
<sequence>MNAYSYMLIKNPDVNFEGITINGYVDLPGRIVQDQKNARSHAVTWDTKVKKQLLDTLNGIVEYDTTFDNYYETMVEAINTGDGETLKEGITDLRGEIQQNQKYAQQLIEELTKLRDSIGHDVRAFGSNKELLQSILKNQGADVDADQKRLEEVLGSVNYYKQLESDGFNVMKGAILGLPIIGGIIVGVARDNLGKLEPLLAELRQTVDYKVTLNRVVGVAYSNINEIDKALDDAINALTYMSTQWHDLDSQYSGVLGHIENAAQKADQNKFKFLKPNLNAAKDSWKTLRTDAVTLKEGIKELKVETVTPQK</sequence>
<name>YHLA_EDWTA</name>